<accession>Q5FJM5</accession>
<protein>
    <recommendedName>
        <fullName evidence="1">Uridylate kinase</fullName>
        <shortName evidence="1">UK</shortName>
        <ecNumber evidence="1">2.7.4.22</ecNumber>
    </recommendedName>
    <alternativeName>
        <fullName evidence="1">Uridine monophosphate kinase</fullName>
        <shortName evidence="1">UMP kinase</shortName>
        <shortName evidence="1">UMPK</shortName>
    </alternativeName>
</protein>
<reference key="1">
    <citation type="journal article" date="2005" name="Proc. Natl. Acad. Sci. U.S.A.">
        <title>Complete genome sequence of the probiotic lactic acid bacterium Lactobacillus acidophilus NCFM.</title>
        <authorList>
            <person name="Altermann E."/>
            <person name="Russell W.M."/>
            <person name="Azcarate-Peril M.A."/>
            <person name="Barrangou R."/>
            <person name="Buck B.L."/>
            <person name="McAuliffe O."/>
            <person name="Souther N."/>
            <person name="Dobson A."/>
            <person name="Duong T."/>
            <person name="Callanan M."/>
            <person name="Lick S."/>
            <person name="Hamrick A."/>
            <person name="Cano R."/>
            <person name="Klaenhammer T.R."/>
        </authorList>
    </citation>
    <scope>NUCLEOTIDE SEQUENCE [LARGE SCALE GENOMIC DNA]</scope>
    <source>
        <strain>ATCC 700396 / NCK56 / N2 / NCFM</strain>
    </source>
</reference>
<proteinExistence type="inferred from homology"/>
<comment type="function">
    <text evidence="1">Catalyzes the reversible phosphorylation of UMP to UDP.</text>
</comment>
<comment type="catalytic activity">
    <reaction evidence="1">
        <text>UMP + ATP = UDP + ADP</text>
        <dbReference type="Rhea" id="RHEA:24400"/>
        <dbReference type="ChEBI" id="CHEBI:30616"/>
        <dbReference type="ChEBI" id="CHEBI:57865"/>
        <dbReference type="ChEBI" id="CHEBI:58223"/>
        <dbReference type="ChEBI" id="CHEBI:456216"/>
        <dbReference type="EC" id="2.7.4.22"/>
    </reaction>
</comment>
<comment type="activity regulation">
    <text evidence="1">Allosterically activated by GTP. Inhibited by UTP.</text>
</comment>
<comment type="pathway">
    <text evidence="1">Pyrimidine metabolism; CTP biosynthesis via de novo pathway; UDP from UMP (UMPK route): step 1/1.</text>
</comment>
<comment type="subunit">
    <text evidence="1">Homohexamer.</text>
</comment>
<comment type="subcellular location">
    <subcellularLocation>
        <location evidence="1">Cytoplasm</location>
    </subcellularLocation>
</comment>
<comment type="similarity">
    <text evidence="1">Belongs to the UMP kinase family.</text>
</comment>
<gene>
    <name evidence="1" type="primary">pyrH</name>
    <name type="ordered locus">LBA1268</name>
</gene>
<keyword id="KW-0021">Allosteric enzyme</keyword>
<keyword id="KW-0067">ATP-binding</keyword>
<keyword id="KW-0963">Cytoplasm</keyword>
<keyword id="KW-0418">Kinase</keyword>
<keyword id="KW-0547">Nucleotide-binding</keyword>
<keyword id="KW-0665">Pyrimidine biosynthesis</keyword>
<keyword id="KW-1185">Reference proteome</keyword>
<keyword id="KW-0808">Transferase</keyword>
<sequence>MSQVKYNRIILKISGEALAGDKGNGINPTVIGHLANEIKSVHDLGVEIGIVCGGGNMWRGETGAKLGMERAQADYMGMLATIMNGLALQDGLEKVGVPTRMQTSIEMRQIAEPYIRRRALRHLEKGRVVIFGGGTGNPYFSTDTTAALRAAEIGADVILMAKNGVDGIYSADPKTDPSATKFAELTQLDLISKDLKVMDRTASSLSMDTEIPLIVFNVNTPGNIKKVVMGENIGTVIRGDK</sequence>
<feature type="chain" id="PRO_1000053937" description="Uridylate kinase">
    <location>
        <begin position="1"/>
        <end position="241"/>
    </location>
</feature>
<feature type="region of interest" description="Involved in allosteric activation by GTP" evidence="1">
    <location>
        <begin position="20"/>
        <end position="25"/>
    </location>
</feature>
<feature type="binding site" evidence="1">
    <location>
        <begin position="12"/>
        <end position="15"/>
    </location>
    <ligand>
        <name>ATP</name>
        <dbReference type="ChEBI" id="CHEBI:30616"/>
    </ligand>
</feature>
<feature type="binding site" evidence="1">
    <location>
        <position position="54"/>
    </location>
    <ligand>
        <name>UMP</name>
        <dbReference type="ChEBI" id="CHEBI:57865"/>
    </ligand>
</feature>
<feature type="binding site" evidence="1">
    <location>
        <position position="55"/>
    </location>
    <ligand>
        <name>ATP</name>
        <dbReference type="ChEBI" id="CHEBI:30616"/>
    </ligand>
</feature>
<feature type="binding site" evidence="1">
    <location>
        <position position="59"/>
    </location>
    <ligand>
        <name>ATP</name>
        <dbReference type="ChEBI" id="CHEBI:30616"/>
    </ligand>
</feature>
<feature type="binding site" evidence="1">
    <location>
        <position position="74"/>
    </location>
    <ligand>
        <name>UMP</name>
        <dbReference type="ChEBI" id="CHEBI:57865"/>
    </ligand>
</feature>
<feature type="binding site" evidence="1">
    <location>
        <begin position="135"/>
        <end position="142"/>
    </location>
    <ligand>
        <name>UMP</name>
        <dbReference type="ChEBI" id="CHEBI:57865"/>
    </ligand>
</feature>
<feature type="binding site" evidence="1">
    <location>
        <position position="163"/>
    </location>
    <ligand>
        <name>ATP</name>
        <dbReference type="ChEBI" id="CHEBI:30616"/>
    </ligand>
</feature>
<feature type="binding site" evidence="1">
    <location>
        <position position="169"/>
    </location>
    <ligand>
        <name>ATP</name>
        <dbReference type="ChEBI" id="CHEBI:30616"/>
    </ligand>
</feature>
<feature type="binding site" evidence="1">
    <location>
        <position position="172"/>
    </location>
    <ligand>
        <name>ATP</name>
        <dbReference type="ChEBI" id="CHEBI:30616"/>
    </ligand>
</feature>
<evidence type="ECO:0000255" key="1">
    <source>
        <dbReference type="HAMAP-Rule" id="MF_01220"/>
    </source>
</evidence>
<dbReference type="EC" id="2.7.4.22" evidence="1"/>
<dbReference type="EMBL" id="CP000033">
    <property type="protein sequence ID" value="AAV43099.1"/>
    <property type="molecule type" value="Genomic_DNA"/>
</dbReference>
<dbReference type="RefSeq" id="WP_011254400.1">
    <property type="nucleotide sequence ID" value="NC_006814.3"/>
</dbReference>
<dbReference type="RefSeq" id="YP_194130.1">
    <property type="nucleotide sequence ID" value="NC_006814.3"/>
</dbReference>
<dbReference type="SMR" id="Q5FJM5"/>
<dbReference type="STRING" id="272621.LBA1268"/>
<dbReference type="GeneID" id="93289644"/>
<dbReference type="KEGG" id="lac:LBA1268"/>
<dbReference type="PATRIC" id="fig|272621.13.peg.1201"/>
<dbReference type="eggNOG" id="COG0528">
    <property type="taxonomic scope" value="Bacteria"/>
</dbReference>
<dbReference type="HOGENOM" id="CLU_033861_0_0_9"/>
<dbReference type="OrthoDB" id="9807458at2"/>
<dbReference type="BioCyc" id="LACI272621:G1G49-1249-MONOMER"/>
<dbReference type="UniPathway" id="UPA00159">
    <property type="reaction ID" value="UER00275"/>
</dbReference>
<dbReference type="Proteomes" id="UP000006381">
    <property type="component" value="Chromosome"/>
</dbReference>
<dbReference type="GO" id="GO:0005737">
    <property type="term" value="C:cytoplasm"/>
    <property type="evidence" value="ECO:0007669"/>
    <property type="project" value="UniProtKB-SubCell"/>
</dbReference>
<dbReference type="GO" id="GO:0005524">
    <property type="term" value="F:ATP binding"/>
    <property type="evidence" value="ECO:0007669"/>
    <property type="project" value="UniProtKB-KW"/>
</dbReference>
<dbReference type="GO" id="GO:0033862">
    <property type="term" value="F:UMP kinase activity"/>
    <property type="evidence" value="ECO:0007669"/>
    <property type="project" value="UniProtKB-EC"/>
</dbReference>
<dbReference type="GO" id="GO:0044210">
    <property type="term" value="P:'de novo' CTP biosynthetic process"/>
    <property type="evidence" value="ECO:0007669"/>
    <property type="project" value="UniProtKB-UniRule"/>
</dbReference>
<dbReference type="GO" id="GO:0006225">
    <property type="term" value="P:UDP biosynthetic process"/>
    <property type="evidence" value="ECO:0007669"/>
    <property type="project" value="TreeGrafter"/>
</dbReference>
<dbReference type="CDD" id="cd04254">
    <property type="entry name" value="AAK_UMPK-PyrH-Ec"/>
    <property type="match status" value="1"/>
</dbReference>
<dbReference type="FunFam" id="3.40.1160.10:FF:000001">
    <property type="entry name" value="Uridylate kinase"/>
    <property type="match status" value="1"/>
</dbReference>
<dbReference type="Gene3D" id="3.40.1160.10">
    <property type="entry name" value="Acetylglutamate kinase-like"/>
    <property type="match status" value="1"/>
</dbReference>
<dbReference type="HAMAP" id="MF_01220_B">
    <property type="entry name" value="PyrH_B"/>
    <property type="match status" value="1"/>
</dbReference>
<dbReference type="InterPro" id="IPR036393">
    <property type="entry name" value="AceGlu_kinase-like_sf"/>
</dbReference>
<dbReference type="InterPro" id="IPR001048">
    <property type="entry name" value="Asp/Glu/Uridylate_kinase"/>
</dbReference>
<dbReference type="InterPro" id="IPR011817">
    <property type="entry name" value="Uridylate_kinase"/>
</dbReference>
<dbReference type="InterPro" id="IPR015963">
    <property type="entry name" value="Uridylate_kinase_bac"/>
</dbReference>
<dbReference type="NCBIfam" id="TIGR02075">
    <property type="entry name" value="pyrH_bact"/>
    <property type="match status" value="1"/>
</dbReference>
<dbReference type="PANTHER" id="PTHR42833">
    <property type="entry name" value="URIDYLATE KINASE"/>
    <property type="match status" value="1"/>
</dbReference>
<dbReference type="PANTHER" id="PTHR42833:SF4">
    <property type="entry name" value="URIDYLATE KINASE PUMPKIN, CHLOROPLASTIC"/>
    <property type="match status" value="1"/>
</dbReference>
<dbReference type="Pfam" id="PF00696">
    <property type="entry name" value="AA_kinase"/>
    <property type="match status" value="1"/>
</dbReference>
<dbReference type="PIRSF" id="PIRSF005650">
    <property type="entry name" value="Uridylate_kin"/>
    <property type="match status" value="1"/>
</dbReference>
<dbReference type="SUPFAM" id="SSF53633">
    <property type="entry name" value="Carbamate kinase-like"/>
    <property type="match status" value="1"/>
</dbReference>
<name>PYRH_LACAC</name>
<organism>
    <name type="scientific">Lactobacillus acidophilus (strain ATCC 700396 / NCK56 / N2 / NCFM)</name>
    <dbReference type="NCBI Taxonomy" id="272621"/>
    <lineage>
        <taxon>Bacteria</taxon>
        <taxon>Bacillati</taxon>
        <taxon>Bacillota</taxon>
        <taxon>Bacilli</taxon>
        <taxon>Lactobacillales</taxon>
        <taxon>Lactobacillaceae</taxon>
        <taxon>Lactobacillus</taxon>
    </lineage>
</organism>